<feature type="chain" id="PRO_0000108822" description="Phospho-N-acetylmuramoyl-pentapeptide-transferase">
    <location>
        <begin position="1"/>
        <end position="360"/>
    </location>
</feature>
<feature type="topological domain" description="Periplasmic" evidence="1">
    <location>
        <begin position="1"/>
        <end position="25"/>
    </location>
</feature>
<feature type="transmembrane region" description="Helical" evidence="1">
    <location>
        <begin position="26"/>
        <end position="46"/>
    </location>
</feature>
<feature type="topological domain" description="Cytoplasmic" evidence="1">
    <location>
        <begin position="47"/>
        <end position="71"/>
    </location>
</feature>
<feature type="transmembrane region" description="Helical" evidence="1">
    <location>
        <begin position="72"/>
        <end position="92"/>
    </location>
</feature>
<feature type="topological domain" description="Periplasmic" evidence="1">
    <location>
        <position position="93"/>
    </location>
</feature>
<feature type="transmembrane region" description="Helical" evidence="1">
    <location>
        <begin position="94"/>
        <end position="114"/>
    </location>
</feature>
<feature type="topological domain" description="Cytoplasmic" evidence="1">
    <location>
        <begin position="115"/>
        <end position="131"/>
    </location>
</feature>
<feature type="transmembrane region" description="Helical" evidence="1">
    <location>
        <begin position="132"/>
        <end position="152"/>
    </location>
</feature>
<feature type="topological domain" description="Periplasmic" evidence="1">
    <location>
        <begin position="153"/>
        <end position="167"/>
    </location>
</feature>
<feature type="transmembrane region" description="Helical" evidence="1">
    <location>
        <begin position="168"/>
        <end position="188"/>
    </location>
</feature>
<feature type="topological domain" description="Cytoplasmic" evidence="1">
    <location>
        <begin position="189"/>
        <end position="198"/>
    </location>
</feature>
<feature type="transmembrane region" description="Helical" evidence="1">
    <location>
        <begin position="199"/>
        <end position="219"/>
    </location>
</feature>
<feature type="topological domain" description="Periplasmic" evidence="1">
    <location>
        <begin position="220"/>
        <end position="235"/>
    </location>
</feature>
<feature type="transmembrane region" description="Helical" evidence="1">
    <location>
        <begin position="236"/>
        <end position="256"/>
    </location>
</feature>
<feature type="topological domain" description="Cytoplasmic" evidence="1">
    <location>
        <begin position="257"/>
        <end position="262"/>
    </location>
</feature>
<feature type="transmembrane region" description="Helical" evidence="1">
    <location>
        <begin position="263"/>
        <end position="283"/>
    </location>
</feature>
<feature type="topological domain" description="Periplasmic" evidence="1">
    <location>
        <begin position="284"/>
        <end position="287"/>
    </location>
</feature>
<feature type="transmembrane region" description="Helical" evidence="1">
    <location>
        <begin position="288"/>
        <end position="308"/>
    </location>
</feature>
<feature type="topological domain" description="Cytoplasmic" evidence="1">
    <location>
        <begin position="309"/>
        <end position="337"/>
    </location>
</feature>
<feature type="transmembrane region" description="Helical" evidence="1">
    <location>
        <begin position="338"/>
        <end position="358"/>
    </location>
</feature>
<feature type="topological domain" description="Periplasmic" evidence="1">
    <location>
        <begin position="359"/>
        <end position="360"/>
    </location>
</feature>
<organism>
    <name type="scientific">Escherichia coli O157:H7</name>
    <dbReference type="NCBI Taxonomy" id="83334"/>
    <lineage>
        <taxon>Bacteria</taxon>
        <taxon>Pseudomonadati</taxon>
        <taxon>Pseudomonadota</taxon>
        <taxon>Gammaproteobacteria</taxon>
        <taxon>Enterobacterales</taxon>
        <taxon>Enterobacteriaceae</taxon>
        <taxon>Escherichia</taxon>
    </lineage>
</organism>
<gene>
    <name evidence="1" type="primary">mraY</name>
    <name type="ordered locus">Z0097</name>
    <name type="ordered locus">ECs0091</name>
</gene>
<protein>
    <recommendedName>
        <fullName evidence="1">Phospho-N-acetylmuramoyl-pentapeptide-transferase</fullName>
        <ecNumber evidence="1">2.7.8.13</ecNumber>
    </recommendedName>
    <alternativeName>
        <fullName evidence="1">UDP-MurNAc-pentapeptide phosphotransferase</fullName>
    </alternativeName>
</protein>
<proteinExistence type="inferred from homology"/>
<keyword id="KW-0131">Cell cycle</keyword>
<keyword id="KW-0132">Cell division</keyword>
<keyword id="KW-0997">Cell inner membrane</keyword>
<keyword id="KW-1003">Cell membrane</keyword>
<keyword id="KW-0133">Cell shape</keyword>
<keyword id="KW-0961">Cell wall biogenesis/degradation</keyword>
<keyword id="KW-0460">Magnesium</keyword>
<keyword id="KW-0472">Membrane</keyword>
<keyword id="KW-0479">Metal-binding</keyword>
<keyword id="KW-0573">Peptidoglycan synthesis</keyword>
<keyword id="KW-1185">Reference proteome</keyword>
<keyword id="KW-0808">Transferase</keyword>
<keyword id="KW-0812">Transmembrane</keyword>
<keyword id="KW-1133">Transmembrane helix</keyword>
<reference key="1">
    <citation type="journal article" date="2001" name="Nature">
        <title>Genome sequence of enterohaemorrhagic Escherichia coli O157:H7.</title>
        <authorList>
            <person name="Perna N.T."/>
            <person name="Plunkett G. III"/>
            <person name="Burland V."/>
            <person name="Mau B."/>
            <person name="Glasner J.D."/>
            <person name="Rose D.J."/>
            <person name="Mayhew G.F."/>
            <person name="Evans P.S."/>
            <person name="Gregor J."/>
            <person name="Kirkpatrick H.A."/>
            <person name="Posfai G."/>
            <person name="Hackett J."/>
            <person name="Klink S."/>
            <person name="Boutin A."/>
            <person name="Shao Y."/>
            <person name="Miller L."/>
            <person name="Grotbeck E.J."/>
            <person name="Davis N.W."/>
            <person name="Lim A."/>
            <person name="Dimalanta E.T."/>
            <person name="Potamousis K."/>
            <person name="Apodaca J."/>
            <person name="Anantharaman T.S."/>
            <person name="Lin J."/>
            <person name="Yen G."/>
            <person name="Schwartz D.C."/>
            <person name="Welch R.A."/>
            <person name="Blattner F.R."/>
        </authorList>
    </citation>
    <scope>NUCLEOTIDE SEQUENCE [LARGE SCALE GENOMIC DNA]</scope>
    <source>
        <strain>O157:H7 / EDL933 / ATCC 700927 / EHEC</strain>
    </source>
</reference>
<reference key="2">
    <citation type="journal article" date="2001" name="DNA Res.">
        <title>Complete genome sequence of enterohemorrhagic Escherichia coli O157:H7 and genomic comparison with a laboratory strain K-12.</title>
        <authorList>
            <person name="Hayashi T."/>
            <person name="Makino K."/>
            <person name="Ohnishi M."/>
            <person name="Kurokawa K."/>
            <person name="Ishii K."/>
            <person name="Yokoyama K."/>
            <person name="Han C.-G."/>
            <person name="Ohtsubo E."/>
            <person name="Nakayama K."/>
            <person name="Murata T."/>
            <person name="Tanaka M."/>
            <person name="Tobe T."/>
            <person name="Iida T."/>
            <person name="Takami H."/>
            <person name="Honda T."/>
            <person name="Sasakawa C."/>
            <person name="Ogasawara N."/>
            <person name="Yasunaga T."/>
            <person name="Kuhara S."/>
            <person name="Shiba T."/>
            <person name="Hattori M."/>
            <person name="Shinagawa H."/>
        </authorList>
    </citation>
    <scope>NUCLEOTIDE SEQUENCE [LARGE SCALE GENOMIC DNA]</scope>
    <source>
        <strain>O157:H7 / Sakai / RIMD 0509952 / EHEC</strain>
    </source>
</reference>
<sequence length="360" mass="39903">MLVWLAEHLVKYYSGFNVFSYLTFRAIVSLLTALFISLWMGPRMIAHLQKLSFGQVVRNDGPESHFSKRGTPTMGGIMILTAIVISVLLWAYPSNPYVWCVLVVLVGYGVIGFVDDYRKVVRKDTKGLIARWKYFWMSVIALGVAFALYLVGKDTPATQLVVPFFKDVMPQLGLFYILLAYFVIVGTGNAVNLTDGLDGLAIMPTVFVAGGFALVAWATGNMNFASYLHIPYLRHAGELVIVCTAIVGAGLGFLWFNTYPAQVFMGDVGSLALGGALGIIAVLLRQEFLLVIMGGVFVVETLSVILQVGSFKLRGQRIFRMAPIHHHYELKGWPEPRVIVRFWIISLMLVLIGLATLKVR</sequence>
<dbReference type="EC" id="2.7.8.13" evidence="1"/>
<dbReference type="EMBL" id="AE005174">
    <property type="protein sequence ID" value="AAG54391.1"/>
    <property type="molecule type" value="Genomic_DNA"/>
</dbReference>
<dbReference type="EMBL" id="BA000007">
    <property type="protein sequence ID" value="BAB33514.1"/>
    <property type="molecule type" value="Genomic_DNA"/>
</dbReference>
<dbReference type="PIR" id="C85491">
    <property type="entry name" value="C85491"/>
</dbReference>
<dbReference type="PIR" id="C90640">
    <property type="entry name" value="C90640"/>
</dbReference>
<dbReference type="RefSeq" id="NP_308118.1">
    <property type="nucleotide sequence ID" value="NC_002695.1"/>
</dbReference>
<dbReference type="RefSeq" id="WP_000964134.1">
    <property type="nucleotide sequence ID" value="NZ_VOAI01000002.1"/>
</dbReference>
<dbReference type="SMR" id="P64258"/>
<dbReference type="STRING" id="155864.Z0097"/>
<dbReference type="GeneID" id="75169987"/>
<dbReference type="GeneID" id="913542"/>
<dbReference type="KEGG" id="ece:Z0097"/>
<dbReference type="KEGG" id="ecs:ECs_0091"/>
<dbReference type="PATRIC" id="fig|386585.9.peg.191"/>
<dbReference type="eggNOG" id="COG0472">
    <property type="taxonomic scope" value="Bacteria"/>
</dbReference>
<dbReference type="HOGENOM" id="CLU_023982_0_0_6"/>
<dbReference type="OMA" id="DTPTMGG"/>
<dbReference type="UniPathway" id="UPA00219"/>
<dbReference type="Proteomes" id="UP000000558">
    <property type="component" value="Chromosome"/>
</dbReference>
<dbReference type="Proteomes" id="UP000002519">
    <property type="component" value="Chromosome"/>
</dbReference>
<dbReference type="GO" id="GO:0005886">
    <property type="term" value="C:plasma membrane"/>
    <property type="evidence" value="ECO:0007669"/>
    <property type="project" value="UniProtKB-SubCell"/>
</dbReference>
<dbReference type="GO" id="GO:0046872">
    <property type="term" value="F:metal ion binding"/>
    <property type="evidence" value="ECO:0007669"/>
    <property type="project" value="UniProtKB-KW"/>
</dbReference>
<dbReference type="GO" id="GO:0008963">
    <property type="term" value="F:phospho-N-acetylmuramoyl-pentapeptide-transferase activity"/>
    <property type="evidence" value="ECO:0007669"/>
    <property type="project" value="UniProtKB-UniRule"/>
</dbReference>
<dbReference type="GO" id="GO:0051992">
    <property type="term" value="F:UDP-N-acetylmuramoyl-L-alanyl-D-glutamyl-meso-2,6-diaminopimelyl-D-alanyl-D-alanine:undecaprenyl-phosphate transferase activity"/>
    <property type="evidence" value="ECO:0007669"/>
    <property type="project" value="RHEA"/>
</dbReference>
<dbReference type="GO" id="GO:0051301">
    <property type="term" value="P:cell division"/>
    <property type="evidence" value="ECO:0007669"/>
    <property type="project" value="UniProtKB-KW"/>
</dbReference>
<dbReference type="GO" id="GO:0071555">
    <property type="term" value="P:cell wall organization"/>
    <property type="evidence" value="ECO:0007669"/>
    <property type="project" value="UniProtKB-KW"/>
</dbReference>
<dbReference type="GO" id="GO:0009252">
    <property type="term" value="P:peptidoglycan biosynthetic process"/>
    <property type="evidence" value="ECO:0007669"/>
    <property type="project" value="UniProtKB-UniRule"/>
</dbReference>
<dbReference type="GO" id="GO:0008360">
    <property type="term" value="P:regulation of cell shape"/>
    <property type="evidence" value="ECO:0007669"/>
    <property type="project" value="UniProtKB-KW"/>
</dbReference>
<dbReference type="CDD" id="cd06852">
    <property type="entry name" value="GT_MraY"/>
    <property type="match status" value="1"/>
</dbReference>
<dbReference type="HAMAP" id="MF_00038">
    <property type="entry name" value="MraY"/>
    <property type="match status" value="1"/>
</dbReference>
<dbReference type="InterPro" id="IPR000715">
    <property type="entry name" value="Glycosyl_transferase_4"/>
</dbReference>
<dbReference type="InterPro" id="IPR003524">
    <property type="entry name" value="PNAcMuramoyl-5peptid_Trfase"/>
</dbReference>
<dbReference type="InterPro" id="IPR018480">
    <property type="entry name" value="PNAcMuramoyl-5peptid_Trfase_CS"/>
</dbReference>
<dbReference type="NCBIfam" id="TIGR00445">
    <property type="entry name" value="mraY"/>
    <property type="match status" value="1"/>
</dbReference>
<dbReference type="PANTHER" id="PTHR22926">
    <property type="entry name" value="PHOSPHO-N-ACETYLMURAMOYL-PENTAPEPTIDE-TRANSFERASE"/>
    <property type="match status" value="1"/>
</dbReference>
<dbReference type="PANTHER" id="PTHR22926:SF5">
    <property type="entry name" value="PHOSPHO-N-ACETYLMURAMOYL-PENTAPEPTIDE-TRANSFERASE HOMOLOG"/>
    <property type="match status" value="1"/>
</dbReference>
<dbReference type="Pfam" id="PF00953">
    <property type="entry name" value="Glycos_transf_4"/>
    <property type="match status" value="1"/>
</dbReference>
<dbReference type="Pfam" id="PF10555">
    <property type="entry name" value="MraY_sig1"/>
    <property type="match status" value="1"/>
</dbReference>
<dbReference type="PROSITE" id="PS01347">
    <property type="entry name" value="MRAY_1"/>
    <property type="match status" value="1"/>
</dbReference>
<dbReference type="PROSITE" id="PS01348">
    <property type="entry name" value="MRAY_2"/>
    <property type="match status" value="1"/>
</dbReference>
<name>MRAY_ECO57</name>
<accession>P64258</accession>
<accession>Q8X9Z0</accession>
<comment type="function">
    <text evidence="1">Catalyzes the initial step of the lipid cycle reactions in the biosynthesis of the cell wall peptidoglycan: transfers peptidoglycan precursor phospho-MurNAc-pentapeptide from UDP-MurNAc-pentapeptide onto the lipid carrier undecaprenyl phosphate, yielding undecaprenyl-pyrophosphoryl-MurNAc-pentapeptide, known as lipid I.</text>
</comment>
<comment type="catalytic activity">
    <reaction evidence="1">
        <text>UDP-N-acetyl-alpha-D-muramoyl-L-alanyl-gamma-D-glutamyl-meso-2,6-diaminopimeloyl-D-alanyl-D-alanine + di-trans,octa-cis-undecaprenyl phosphate = di-trans,octa-cis-undecaprenyl diphospho-N-acetyl-alpha-D-muramoyl-L-alanyl-D-glutamyl-meso-2,6-diaminopimeloyl-D-alanyl-D-alanine + UMP</text>
        <dbReference type="Rhea" id="RHEA:28386"/>
        <dbReference type="ChEBI" id="CHEBI:57865"/>
        <dbReference type="ChEBI" id="CHEBI:60392"/>
        <dbReference type="ChEBI" id="CHEBI:61386"/>
        <dbReference type="ChEBI" id="CHEBI:61387"/>
        <dbReference type="EC" id="2.7.8.13"/>
    </reaction>
</comment>
<comment type="cofactor">
    <cofactor evidence="1">
        <name>Mg(2+)</name>
        <dbReference type="ChEBI" id="CHEBI:18420"/>
    </cofactor>
</comment>
<comment type="pathway">
    <text evidence="1">Cell wall biogenesis; peptidoglycan biosynthesis.</text>
</comment>
<comment type="subcellular location">
    <subcellularLocation>
        <location evidence="1">Cell inner membrane</location>
        <topology evidence="1">Multi-pass membrane protein</topology>
    </subcellularLocation>
</comment>
<comment type="similarity">
    <text evidence="1 2">Belongs to the glycosyltransferase 4 family. MraY subfamily.</text>
</comment>
<evidence type="ECO:0000255" key="1">
    <source>
        <dbReference type="HAMAP-Rule" id="MF_00038"/>
    </source>
</evidence>
<evidence type="ECO:0000305" key="2"/>